<reference key="1">
    <citation type="journal article" date="2000" name="DNA Res.">
        <title>Structural analysis of Arabidopsis thaliana chromosome 3. I. Sequence features of the regions of 4,504,864 bp covered by sixty P1 and TAC clones.</title>
        <authorList>
            <person name="Sato S."/>
            <person name="Nakamura Y."/>
            <person name="Kaneko T."/>
            <person name="Katoh T."/>
            <person name="Asamizu E."/>
            <person name="Tabata S."/>
        </authorList>
    </citation>
    <scope>NUCLEOTIDE SEQUENCE [LARGE SCALE GENOMIC DNA]</scope>
    <source>
        <strain>cv. Columbia</strain>
    </source>
</reference>
<reference key="2">
    <citation type="journal article" date="2017" name="Plant J.">
        <title>Araport11: a complete reannotation of the Arabidopsis thaliana reference genome.</title>
        <authorList>
            <person name="Cheng C.Y."/>
            <person name="Krishnakumar V."/>
            <person name="Chan A.P."/>
            <person name="Thibaud-Nissen F."/>
            <person name="Schobel S."/>
            <person name="Town C.D."/>
        </authorList>
    </citation>
    <scope>GENOME REANNOTATION</scope>
    <source>
        <strain>cv. Columbia</strain>
    </source>
</reference>
<reference key="3">
    <citation type="journal article" date="2004" name="Genome Res.">
        <title>Whole genome sequence comparisons and 'full-length' cDNA sequences: a combined approach to evaluate and improve Arabidopsis genome annotation.</title>
        <authorList>
            <person name="Castelli V."/>
            <person name="Aury J.-M."/>
            <person name="Jaillon O."/>
            <person name="Wincker P."/>
            <person name="Clepet C."/>
            <person name="Menard M."/>
            <person name="Cruaud C."/>
            <person name="Quetier F."/>
            <person name="Scarpelli C."/>
            <person name="Schaechter V."/>
            <person name="Temple G."/>
            <person name="Caboche M."/>
            <person name="Weissenbach J."/>
            <person name="Salanoubat M."/>
        </authorList>
    </citation>
    <scope>NUCLEOTIDE SEQUENCE [LARGE SCALE MRNA] (ISOFORMS 1 AND 2)</scope>
    <source>
        <strain>cv. Columbia</strain>
    </source>
</reference>
<reference key="4">
    <citation type="journal article" date="2010" name="Proc. Natl. Acad. Sci. U.S.A.">
        <title>Herbivore-induced and floral homoterpene volatiles are biosynthesized by a single P450 enzyme (CYP82G1) in Arabidopsis.</title>
        <authorList>
            <person name="Lee S."/>
            <person name="Badieyan S."/>
            <person name="Bevan D.R."/>
            <person name="Herde M."/>
            <person name="Gatz C."/>
            <person name="Tholl D."/>
        </authorList>
    </citation>
    <scope>FUNCTION</scope>
    <scope>BIOPHYSICOCHEMICAL PROPERTIES</scope>
    <scope>CATALYTIC ACTIVITY</scope>
    <scope>TISSUE SPECIFICITY</scope>
    <scope>INDUCTION</scope>
    <scope>DISRUPTION PHENOTYPE</scope>
    <scope>PATHWAY</scope>
</reference>
<reference key="5">
    <citation type="journal article" date="2011" name="Phytochemistry">
        <title>The biochemistry of homoterpenes--common constituents of floral and herbivore-induced plant volatile bouquets.</title>
        <authorList>
            <person name="Tholl D."/>
            <person name="Sohrabi R."/>
            <person name="Huh J.-H."/>
            <person name="Lee S."/>
        </authorList>
    </citation>
    <scope>REVIEW</scope>
</reference>
<reference key="6">
    <citation type="journal article" date="2015" name="PLoS ONE">
        <title>Novel genes affecting the interaction between the cabbage whitefly and Arabidopsis uncovered by genome-wide association mapping.</title>
        <authorList>
            <person name="Broekgaarden C."/>
            <person name="Bucher J."/>
            <person name="Bac-Molenaar J."/>
            <person name="Keurentjes J.J."/>
            <person name="Kruijer W."/>
            <person name="Voorrips R.E."/>
            <person name="Vosman B."/>
        </authorList>
    </citation>
    <scope>FUNCTION</scope>
    <scope>DISRUPTION PHENOTYPE</scope>
    <source>
        <strain>cv. Columbia</strain>
    </source>
</reference>
<reference key="7">
    <citation type="journal article" date="2018" name="Mol. Plant Pathol.">
        <title>Genome-wide association mapping in Arabidopsis identifies novel genes underlying quantitative disease resistance to Alternaria brassicae.</title>
        <authorList>
            <person name="Rajarammohan S."/>
            <person name="Pradhan A.K."/>
            <person name="Pental D."/>
            <person name="Kaur J."/>
        </authorList>
    </citation>
    <scope>FUNCTION</scope>
    <scope>DISRUPTION PHENOTYPE</scope>
    <source>
        <strain>cv. Columbia</strain>
    </source>
</reference>
<reference key="8">
    <citation type="journal article" date="2019" name="Philos. Trans. R. Soc. Lond., B, Biol. Sci.">
        <title>A gossypol biosynthetic intermediate disturbs plant defence response.</title>
        <authorList>
            <person name="Tian X."/>
            <person name="Fang X."/>
            <person name="Huang J.-Q."/>
            <person name="Wang L.-J."/>
            <person name="Mao Y.-B."/>
            <person name="Chen X.-Y."/>
        </authorList>
    </citation>
    <scope>INDUCTION BY 8-HYDROXY-7-KETO-D-CADINENE AND PSEUDOMONAS SYRINGAE</scope>
</reference>
<gene>
    <name evidence="9" type="primary">CYP82G1</name>
    <name evidence="11" type="synonym">OR9</name>
    <name evidence="13" type="ordered locus">At3g25180</name>
    <name evidence="14" type="ORF">MJL12.5</name>
</gene>
<comment type="function">
    <text evidence="4 5 6 10">Involved in the biosynthesis of homoterpenes, attractants of herbivores parasitoids and predators (e.g. predatory mites and parasitoid wasps) (PubMed:21334702). Catalyzes the conversion of the C20 (E,E)-geranyllinalool to C16-homoterpene 4,8,12-trimethyltrideca-1,3,7,11-tetraene (TMTT) of the C15 (E)-nerolidol to C11-homoterpene (E)-4,8-dimethyl-1,3,7-nonatriene (DMNT); these volatile compounds are produced upon insect herbivore attack and emitted from flowers and vegetative tissues during herbivore feeding (PubMed:21088219). Required during resistance responses to the fungus Alternaria brassicae (PubMed:29271603). Prevents oviposition of the phloem-feeding insect cabbage whitefly (Aleyrodes proletella) (PubMed:26699853).</text>
</comment>
<comment type="catalytic activity">
    <reaction evidence="4">
        <text>(3S,6E)-nerolidol + reduced [NADPH--hemoprotein reductase] + O2 = (3E)-4,8-dimethylnona-1,3,7-triene + but-3-en-2-one + oxidized [NADPH--hemoprotein reductase] + 2 H2O + H(+)</text>
        <dbReference type="Rhea" id="RHEA:55424"/>
        <dbReference type="Rhea" id="RHEA-COMP:11964"/>
        <dbReference type="Rhea" id="RHEA-COMP:11965"/>
        <dbReference type="ChEBI" id="CHEBI:15377"/>
        <dbReference type="ChEBI" id="CHEBI:15378"/>
        <dbReference type="ChEBI" id="CHEBI:15379"/>
        <dbReference type="ChEBI" id="CHEBI:48058"/>
        <dbReference type="ChEBI" id="CHEBI:57618"/>
        <dbReference type="ChEBI" id="CHEBI:58210"/>
        <dbReference type="ChEBI" id="CHEBI:59958"/>
        <dbReference type="ChEBI" id="CHEBI:60158"/>
        <dbReference type="EC" id="1.14.14.59"/>
    </reaction>
</comment>
<comment type="catalytic activity">
    <reaction evidence="4">
        <text>(6E,10E)-geranyllinalool + reduced [NADPH--hemoprotein reductase] + O2 = (3E,7E)-4,8,12-trimethyltrideca 1,3,7,11-tetraene + but-3-en-2-one + oxidized [NADPH--hemoprotein reductase] + 2 H2O + H(+)</text>
        <dbReference type="Rhea" id="RHEA:13545"/>
        <dbReference type="Rhea" id="RHEA-COMP:11964"/>
        <dbReference type="Rhea" id="RHEA-COMP:11965"/>
        <dbReference type="ChEBI" id="CHEBI:15377"/>
        <dbReference type="ChEBI" id="CHEBI:15378"/>
        <dbReference type="ChEBI" id="CHEBI:15379"/>
        <dbReference type="ChEBI" id="CHEBI:48058"/>
        <dbReference type="ChEBI" id="CHEBI:57618"/>
        <dbReference type="ChEBI" id="CHEBI:58210"/>
        <dbReference type="ChEBI" id="CHEBI:74299"/>
        <dbReference type="ChEBI" id="CHEBI:74322"/>
        <dbReference type="EC" id="1.14.14.58"/>
    </reaction>
</comment>
<comment type="cofactor">
    <cofactor evidence="1">
        <name>heme</name>
        <dbReference type="ChEBI" id="CHEBI:30413"/>
    </cofactor>
</comment>
<comment type="biophysicochemical properties">
    <kinetics>
        <KM evidence="4">2.68 uM for (E,E)-geranyllinalool</KM>
        <KM evidence="4">1.84 uM for (E)-nerolidol</KM>
        <Vmax evidence="4">16.37 pmol/sec/mg enzyme toward (E,E)-geranyllinalool</Vmax>
        <Vmax evidence="4">29.09 pmol/sec/mg enzyme toward (E)-nerolidol</Vmax>
    </kinetics>
</comment>
<comment type="pathway">
    <text evidence="4">Secondary metabolite biosynthesis; terpenoid biosynthesis.</text>
</comment>
<comment type="subcellular location">
    <subcellularLocation>
        <location evidence="3">Membrane</location>
        <topology evidence="3">Single-pass membrane protein</topology>
    </subcellularLocation>
</comment>
<comment type="alternative products">
    <event type="alternative splicing"/>
    <isoform>
        <id>Q9LSF8-1</id>
        <name>1</name>
        <sequence type="displayed"/>
    </isoform>
    <isoform>
        <id>Q9LSF8-2</id>
        <name>2</name>
        <sequence type="described" ref="VSP_041620 VSP_041621"/>
    </isoform>
</comment>
<comment type="tissue specificity">
    <text evidence="4">Expressed in stems, flower peduncles, receptacle of developing and mature flowers and in stigma of mature opening flower buds.</text>
</comment>
<comment type="induction">
    <text evidence="4 7">By wounding, upon insect feeding, by the fungal elicitor alamethicin and infection with the bacterial pathogen Pseudomonas syringae DC3000 (PubMed:21088219). Induced by the biosynthetic intermediate 8-hydroxy-7-keto-d-cadinene (C234), especially in synergy with the bacterial pathogen P.syringae pv. maculicola (Psm) (PubMed:30967019).</text>
</comment>
<comment type="disruption phenotype">
    <text evidence="4 5 6">No visible phenotype under normal growth conditions, but loss of TMTT production after alamethicin elicitation (PubMed:21088219). Enhanced susceptibility to the fungus Alternaria brassicae (PubMed:29271603). Increased oviposition rate of the phloem-feeding insect cabbage whitefly (Aleyrodes proletella) (PubMed:26699853).</text>
</comment>
<comment type="similarity">
    <text evidence="12">Belongs to the cytochrome P450 family.</text>
</comment>
<comment type="sequence caution" evidence="12">
    <conflict type="frameshift">
        <sequence resource="EMBL" id="BX822752"/>
    </conflict>
</comment>
<evidence type="ECO:0000250" key="1">
    <source>
        <dbReference type="UniProtKB" id="P04798"/>
    </source>
</evidence>
<evidence type="ECO:0000250" key="2">
    <source>
        <dbReference type="UniProtKB" id="Q9SZU1"/>
    </source>
</evidence>
<evidence type="ECO:0000255" key="3"/>
<evidence type="ECO:0000269" key="4">
    <source>
    </source>
</evidence>
<evidence type="ECO:0000269" key="5">
    <source>
    </source>
</evidence>
<evidence type="ECO:0000269" key="6">
    <source>
    </source>
</evidence>
<evidence type="ECO:0000269" key="7">
    <source>
    </source>
</evidence>
<evidence type="ECO:0000303" key="8">
    <source>
    </source>
</evidence>
<evidence type="ECO:0000303" key="9">
    <source>
    </source>
</evidence>
<evidence type="ECO:0000303" key="10">
    <source>
    </source>
</evidence>
<evidence type="ECO:0000303" key="11">
    <source>
    </source>
</evidence>
<evidence type="ECO:0000305" key="12"/>
<evidence type="ECO:0000312" key="13">
    <source>
        <dbReference type="Araport" id="AT3G25180"/>
    </source>
</evidence>
<evidence type="ECO:0000312" key="14">
    <source>
        <dbReference type="EMBL" id="BAB02077.1"/>
    </source>
</evidence>
<accession>Q9LSF8</accession>
<accession>F4J8Y2</accession>
<protein>
    <recommendedName>
        <fullName evidence="9">Dimethylnonatriene synthase</fullName>
        <ecNumber evidence="4">1.14.14.59</ecNumber>
    </recommendedName>
    <alternativeName>
        <fullName evidence="9">Cytochrome P450 82G1</fullName>
    </alternativeName>
    <alternativeName>
        <fullName evidence="11">Protein OVIPOSITION RATE 9</fullName>
    </alternativeName>
    <alternativeName>
        <fullName evidence="9">Trimethyltridecatetraene synthase</fullName>
        <ecNumber evidence="4">1.14.14.58</ecNumber>
    </alternativeName>
</protein>
<name>C82G1_ARATH</name>
<organism>
    <name type="scientific">Arabidopsis thaliana</name>
    <name type="common">Mouse-ear cress</name>
    <dbReference type="NCBI Taxonomy" id="3702"/>
    <lineage>
        <taxon>Eukaryota</taxon>
        <taxon>Viridiplantae</taxon>
        <taxon>Streptophyta</taxon>
        <taxon>Embryophyta</taxon>
        <taxon>Tracheophyta</taxon>
        <taxon>Spermatophyta</taxon>
        <taxon>Magnoliopsida</taxon>
        <taxon>eudicotyledons</taxon>
        <taxon>Gunneridae</taxon>
        <taxon>Pentapetalae</taxon>
        <taxon>rosids</taxon>
        <taxon>malvids</taxon>
        <taxon>Brassicales</taxon>
        <taxon>Brassicaceae</taxon>
        <taxon>Camelineae</taxon>
        <taxon>Arabidopsis</taxon>
    </lineage>
</organism>
<keyword id="KW-0025">Alternative splicing</keyword>
<keyword id="KW-0349">Heme</keyword>
<keyword id="KW-0408">Iron</keyword>
<keyword id="KW-1017">Isopeptide bond</keyword>
<keyword id="KW-0472">Membrane</keyword>
<keyword id="KW-0479">Metal-binding</keyword>
<keyword id="KW-0503">Monooxygenase</keyword>
<keyword id="KW-0560">Oxidoreductase</keyword>
<keyword id="KW-0611">Plant defense</keyword>
<keyword id="KW-1185">Reference proteome</keyword>
<keyword id="KW-0812">Transmembrane</keyword>
<keyword id="KW-1133">Transmembrane helix</keyword>
<keyword id="KW-0832">Ubl conjugation</keyword>
<sequence length="515" mass="58570">MTFLFSTLQLSLFSLALVIFGYIFLRKQLSRCEVDSSTIPEPLGALPLFGHLHLLRGKKLLCKKLAAMSQKHGPIFSLKLGFYRLVVASDPKTVKDCFTTNDLATATRPNIAFGRYVGYNNASLTLAPYGDYWRELRKIVTVHLFSNHSIEMLGHIRSSEVNTLIKHLYKGNGGTSIVKIDMLFEFLTFNIILRKMVGKRIGFGEVNSDEWRYKEALKHCEYLAVIPMIGDVIPWLGWLDFAKNSQMKRLFKELDSVNTKWLHEHLKKRSRNEKDQERTIMDLLLDILPEDIVISGHVRDVIVKATILALTLTGSDSTSITLTWAVSLLLNNPAALEAAQEEIDNSVGKGRWIEESDIQNLKYLQAIVKETHRLYPPAPLTGIREAREDCFVGGYRVEKGTRLLVNIWKLHRDPKIWPDPKTFKPERFMEDKSQCEKSNFEYIPFGSGRRSCPGVNLGLRVVHFVLARLLQGFELHKVSDEPLDMAEGPGLALPKINPVEVVVMPRLDPKLYSLL</sequence>
<feature type="chain" id="PRO_0000411200" description="Dimethylnonatriene synthase">
    <location>
        <begin position="1"/>
        <end position="515"/>
    </location>
</feature>
<feature type="transmembrane region" description="Helical" evidence="3">
    <location>
        <begin position="3"/>
        <end position="23"/>
    </location>
</feature>
<feature type="binding site" evidence="3">
    <location>
        <position position="219"/>
    </location>
    <ligand>
        <name>substrate</name>
    </ligand>
</feature>
<feature type="binding site" description="axial binding residue" evidence="1">
    <location>
        <position position="452"/>
    </location>
    <ligand>
        <name>heme</name>
        <dbReference type="ChEBI" id="CHEBI:30413"/>
    </ligand>
    <ligandPart>
        <name>Fe</name>
        <dbReference type="ChEBI" id="CHEBI:18248"/>
    </ligandPart>
</feature>
<feature type="cross-link" description="Glycyl lysine isopeptide (Lys-Gly) (interchain with G-Cter in ubiquitin)" evidence="2">
    <location>
        <position position="252"/>
    </location>
</feature>
<feature type="splice variant" id="VSP_041620" description="In isoform 2." evidence="8">
    <original>IREAREDCFVGGYRVEKGTR</original>
    <variation>HKSKNLYCHYNSYFMTLLIL</variation>
    <location>
        <begin position="383"/>
        <end position="402"/>
    </location>
</feature>
<feature type="splice variant" id="VSP_041621" description="In isoform 2." evidence="8">
    <location>
        <begin position="403"/>
        <end position="515"/>
    </location>
</feature>
<proteinExistence type="evidence at protein level"/>
<dbReference type="EC" id="1.14.14.59" evidence="4"/>
<dbReference type="EC" id="1.14.14.58" evidence="4"/>
<dbReference type="EMBL" id="AB026647">
    <property type="protein sequence ID" value="BAB02077.1"/>
    <property type="molecule type" value="Genomic_DNA"/>
</dbReference>
<dbReference type="EMBL" id="CP002686">
    <property type="protein sequence ID" value="AEE76989.1"/>
    <property type="molecule type" value="Genomic_DNA"/>
</dbReference>
<dbReference type="EMBL" id="CP002686">
    <property type="protein sequence ID" value="AEE76990.1"/>
    <property type="molecule type" value="Genomic_DNA"/>
</dbReference>
<dbReference type="EMBL" id="BX822302">
    <property type="status" value="NOT_ANNOTATED_CDS"/>
    <property type="molecule type" value="mRNA"/>
</dbReference>
<dbReference type="EMBL" id="BX822752">
    <property type="status" value="NOT_ANNOTATED_CDS"/>
    <property type="molecule type" value="mRNA"/>
</dbReference>
<dbReference type="RefSeq" id="NP_189154.1">
    <molecule id="Q9LSF8-1"/>
    <property type="nucleotide sequence ID" value="NM_113423.4"/>
</dbReference>
<dbReference type="RefSeq" id="NP_974359.1">
    <molecule id="Q9LSF8-2"/>
    <property type="nucleotide sequence ID" value="NM_202630.2"/>
</dbReference>
<dbReference type="SMR" id="Q9LSF8"/>
<dbReference type="FunCoup" id="Q9LSF8">
    <property type="interactions" value="240"/>
</dbReference>
<dbReference type="STRING" id="3702.Q9LSF8"/>
<dbReference type="iPTMnet" id="Q9LSF8"/>
<dbReference type="PaxDb" id="3702-AT3G25180.1"/>
<dbReference type="ProteomicsDB" id="239211">
    <molecule id="Q9LSF8-1"/>
</dbReference>
<dbReference type="EnsemblPlants" id="AT3G25180.1">
    <molecule id="Q9LSF8-1"/>
    <property type="protein sequence ID" value="AT3G25180.1"/>
    <property type="gene ID" value="AT3G25180"/>
</dbReference>
<dbReference type="EnsemblPlants" id="AT3G25180.2">
    <molecule id="Q9LSF8-2"/>
    <property type="protein sequence ID" value="AT3G25180.2"/>
    <property type="gene ID" value="AT3G25180"/>
</dbReference>
<dbReference type="GeneID" id="822110"/>
<dbReference type="Gramene" id="AT3G25180.1">
    <molecule id="Q9LSF8-1"/>
    <property type="protein sequence ID" value="AT3G25180.1"/>
    <property type="gene ID" value="AT3G25180"/>
</dbReference>
<dbReference type="Gramene" id="AT3G25180.2">
    <molecule id="Q9LSF8-2"/>
    <property type="protein sequence ID" value="AT3G25180.2"/>
    <property type="gene ID" value="AT3G25180"/>
</dbReference>
<dbReference type="KEGG" id="ath:AT3G25180"/>
<dbReference type="Araport" id="AT3G25180"/>
<dbReference type="TAIR" id="AT3G25180">
    <property type="gene designation" value="CYP82G1"/>
</dbReference>
<dbReference type="eggNOG" id="KOG0156">
    <property type="taxonomic scope" value="Eukaryota"/>
</dbReference>
<dbReference type="HOGENOM" id="CLU_001570_4_0_1"/>
<dbReference type="InParanoid" id="Q9LSF8"/>
<dbReference type="OMA" id="SEFRDTQ"/>
<dbReference type="PhylomeDB" id="Q9LSF8"/>
<dbReference type="BioCyc" id="ARA:AT3G25180-MONOMER"/>
<dbReference type="BioCyc" id="MetaCyc:AT3G25180-MONOMER"/>
<dbReference type="BRENDA" id="1.14.14.58">
    <property type="organism ID" value="399"/>
</dbReference>
<dbReference type="BRENDA" id="1.14.14.59">
    <property type="organism ID" value="399"/>
</dbReference>
<dbReference type="SABIO-RK" id="Q9LSF8"/>
<dbReference type="UniPathway" id="UPA00213"/>
<dbReference type="PRO" id="PR:Q9LSF8"/>
<dbReference type="Proteomes" id="UP000006548">
    <property type="component" value="Chromosome 3"/>
</dbReference>
<dbReference type="ExpressionAtlas" id="Q9LSF8">
    <property type="expression patterns" value="baseline and differential"/>
</dbReference>
<dbReference type="GO" id="GO:0016020">
    <property type="term" value="C:membrane"/>
    <property type="evidence" value="ECO:0007669"/>
    <property type="project" value="UniProtKB-SubCell"/>
</dbReference>
<dbReference type="GO" id="GO:0097008">
    <property type="term" value="F:(3E)-4,8-dimethyl-1,3,7-nonatriene synthase activity"/>
    <property type="evidence" value="ECO:0000314"/>
    <property type="project" value="TAIR"/>
</dbReference>
<dbReference type="GO" id="GO:0097007">
    <property type="term" value="F:4,8,12-trimethyltrideca-1,3,7,11-tetraene synthase activity"/>
    <property type="evidence" value="ECO:0000314"/>
    <property type="project" value="TAIR"/>
</dbReference>
<dbReference type="GO" id="GO:0102171">
    <property type="term" value="F:DMNT synthase activity"/>
    <property type="evidence" value="ECO:0007669"/>
    <property type="project" value="UniProtKB-EC"/>
</dbReference>
<dbReference type="GO" id="GO:0020037">
    <property type="term" value="F:heme binding"/>
    <property type="evidence" value="ECO:0007669"/>
    <property type="project" value="InterPro"/>
</dbReference>
<dbReference type="GO" id="GO:0005506">
    <property type="term" value="F:iron ion binding"/>
    <property type="evidence" value="ECO:0007669"/>
    <property type="project" value="InterPro"/>
</dbReference>
<dbReference type="GO" id="GO:0050832">
    <property type="term" value="P:defense response to fungus"/>
    <property type="evidence" value="ECO:0000315"/>
    <property type="project" value="UniProtKB"/>
</dbReference>
<dbReference type="GO" id="GO:0002213">
    <property type="term" value="P:defense response to insect"/>
    <property type="evidence" value="ECO:0000315"/>
    <property type="project" value="UniProtKB"/>
</dbReference>
<dbReference type="GO" id="GO:1901045">
    <property type="term" value="P:negative regulation of egg-laying behavior"/>
    <property type="evidence" value="ECO:0000315"/>
    <property type="project" value="UniProtKB"/>
</dbReference>
<dbReference type="GO" id="GO:0009617">
    <property type="term" value="P:response to bacterium"/>
    <property type="evidence" value="ECO:0000270"/>
    <property type="project" value="UniProtKB"/>
</dbReference>
<dbReference type="GO" id="GO:0046246">
    <property type="term" value="P:terpene biosynthetic process"/>
    <property type="evidence" value="ECO:0000314"/>
    <property type="project" value="TAIR"/>
</dbReference>
<dbReference type="GO" id="GO:0016114">
    <property type="term" value="P:terpenoid biosynthetic process"/>
    <property type="evidence" value="ECO:0007669"/>
    <property type="project" value="UniProtKB-UniPathway"/>
</dbReference>
<dbReference type="CDD" id="cd20654">
    <property type="entry name" value="CYP82"/>
    <property type="match status" value="1"/>
</dbReference>
<dbReference type="FunFam" id="1.10.630.10:FF:000081">
    <property type="entry name" value="Cytochrome P450 CYP81N5"/>
    <property type="match status" value="1"/>
</dbReference>
<dbReference type="Gene3D" id="1.10.630.10">
    <property type="entry name" value="Cytochrome P450"/>
    <property type="match status" value="1"/>
</dbReference>
<dbReference type="InterPro" id="IPR001128">
    <property type="entry name" value="Cyt_P450"/>
</dbReference>
<dbReference type="InterPro" id="IPR017972">
    <property type="entry name" value="Cyt_P450_CS"/>
</dbReference>
<dbReference type="InterPro" id="IPR002401">
    <property type="entry name" value="Cyt_P450_E_grp-I"/>
</dbReference>
<dbReference type="InterPro" id="IPR036396">
    <property type="entry name" value="Cyt_P450_sf"/>
</dbReference>
<dbReference type="InterPro" id="IPR050651">
    <property type="entry name" value="Plant_Cytochrome_P450_Monoox"/>
</dbReference>
<dbReference type="PANTHER" id="PTHR47947">
    <property type="entry name" value="CYTOCHROME P450 82C3-RELATED"/>
    <property type="match status" value="1"/>
</dbReference>
<dbReference type="PANTHER" id="PTHR47947:SF25">
    <property type="entry name" value="DIMETHYLNONATRIENE SYNTHASE"/>
    <property type="match status" value="1"/>
</dbReference>
<dbReference type="Pfam" id="PF00067">
    <property type="entry name" value="p450"/>
    <property type="match status" value="1"/>
</dbReference>
<dbReference type="PRINTS" id="PR00463">
    <property type="entry name" value="EP450I"/>
</dbReference>
<dbReference type="PRINTS" id="PR00385">
    <property type="entry name" value="P450"/>
</dbReference>
<dbReference type="SUPFAM" id="SSF48264">
    <property type="entry name" value="Cytochrome P450"/>
    <property type="match status" value="1"/>
</dbReference>
<dbReference type="PROSITE" id="PS00086">
    <property type="entry name" value="CYTOCHROME_P450"/>
    <property type="match status" value="1"/>
</dbReference>